<organism>
    <name type="scientific">Staphylococcus aureus (strain MW2)</name>
    <dbReference type="NCBI Taxonomy" id="196620"/>
    <lineage>
        <taxon>Bacteria</taxon>
        <taxon>Bacillati</taxon>
        <taxon>Bacillota</taxon>
        <taxon>Bacilli</taxon>
        <taxon>Bacillales</taxon>
        <taxon>Staphylococcaceae</taxon>
        <taxon>Staphylococcus</taxon>
    </lineage>
</organism>
<reference key="1">
    <citation type="journal article" date="2002" name="Lancet">
        <title>Genome and virulence determinants of high virulence community-acquired MRSA.</title>
        <authorList>
            <person name="Baba T."/>
            <person name="Takeuchi F."/>
            <person name="Kuroda M."/>
            <person name="Yuzawa H."/>
            <person name="Aoki K."/>
            <person name="Oguchi A."/>
            <person name="Nagai Y."/>
            <person name="Iwama N."/>
            <person name="Asano K."/>
            <person name="Naimi T."/>
            <person name="Kuroda H."/>
            <person name="Cui L."/>
            <person name="Yamamoto K."/>
            <person name="Hiramatsu K."/>
        </authorList>
    </citation>
    <scope>NUCLEOTIDE SEQUENCE [LARGE SCALE GENOMIC DNA]</scope>
    <source>
        <strain>MW2</strain>
    </source>
</reference>
<comment type="function">
    <text evidence="2">Regulates transcriptional attenuation of the pyrimidine nucleotide (pyr) operon by binding in a uridine-dependent manner to specific sites on pyr mRNA. This disrupts an antiterminator hairpin in the RNA and favors formation of a downstream transcription terminator, leading to a reduced expression of downstream genes.</text>
</comment>
<comment type="function">
    <text evidence="2">Also displays a weak uracil phosphoribosyltransferase activity which is not physiologically significant.</text>
</comment>
<comment type="catalytic activity">
    <reaction evidence="2">
        <text>UMP + diphosphate = 5-phospho-alpha-D-ribose 1-diphosphate + uracil</text>
        <dbReference type="Rhea" id="RHEA:13017"/>
        <dbReference type="ChEBI" id="CHEBI:17568"/>
        <dbReference type="ChEBI" id="CHEBI:33019"/>
        <dbReference type="ChEBI" id="CHEBI:57865"/>
        <dbReference type="ChEBI" id="CHEBI:58017"/>
        <dbReference type="EC" id="2.4.2.9"/>
    </reaction>
</comment>
<comment type="subunit">
    <text evidence="2">Homodimer and homohexamer; in equilibrium.</text>
</comment>
<comment type="similarity">
    <text evidence="2">Belongs to the purine/pyrimidine phosphoribosyltransferase family. PyrR subfamily.</text>
</comment>
<sequence>MSERIIMDDAAIQRTVTRIAHEILEYNKGTDNLILLGIKTRGEYLANRIQDKIHQIEQQRIPTGTIDITYFRDDIEHMSSLTTKDAIDIDTDITDKVVIIIDDVLYTGRTVRASLDAILLNARPIKIGLAALVDRGHRELPIRADFVGKNIPTSKEETVSVYLEEMDQRNAVIIK</sequence>
<evidence type="ECO:0000250" key="1"/>
<evidence type="ECO:0000255" key="2">
    <source>
        <dbReference type="HAMAP-Rule" id="MF_01219"/>
    </source>
</evidence>
<gene>
    <name evidence="2" type="primary">pyrR</name>
    <name type="ordered locus">MW1081</name>
</gene>
<proteinExistence type="inferred from homology"/>
<name>PYRR_STAAW</name>
<protein>
    <recommendedName>
        <fullName evidence="2">Bifunctional protein PyrR</fullName>
    </recommendedName>
    <domain>
        <recommendedName>
            <fullName evidence="2">Pyrimidine operon regulatory protein</fullName>
        </recommendedName>
    </domain>
    <domain>
        <recommendedName>
            <fullName evidence="2">Uracil phosphoribosyltransferase</fullName>
            <shortName evidence="2">UPRTase</shortName>
            <ecNumber evidence="2">2.4.2.9</ecNumber>
        </recommendedName>
    </domain>
</protein>
<feature type="chain" id="PRO_0000183058" description="Bifunctional protein PyrR">
    <location>
        <begin position="1"/>
        <end position="175"/>
    </location>
</feature>
<feature type="short sequence motif" description="PRPP-binding" evidence="2">
    <location>
        <begin position="98"/>
        <end position="110"/>
    </location>
</feature>
<feature type="binding site" evidence="1">
    <location>
        <begin position="40"/>
        <end position="41"/>
    </location>
    <ligand>
        <name>substrate</name>
    </ligand>
</feature>
<feature type="binding site" evidence="1">
    <location>
        <begin position="102"/>
        <end position="110"/>
    </location>
    <ligand>
        <name>substrate</name>
    </ligand>
</feature>
<feature type="binding site" evidence="1">
    <location>
        <position position="135"/>
    </location>
    <ligand>
        <name>substrate</name>
    </ligand>
</feature>
<feature type="binding site" evidence="1">
    <location>
        <position position="159"/>
    </location>
    <ligand>
        <name>substrate</name>
    </ligand>
</feature>
<accession>P65945</accession>
<accession>P59012</accession>
<accession>Q99US0</accession>
<keyword id="KW-0328">Glycosyltransferase</keyword>
<keyword id="KW-0694">RNA-binding</keyword>
<keyword id="KW-0804">Transcription</keyword>
<keyword id="KW-0805">Transcription regulation</keyword>
<keyword id="KW-0806">Transcription termination</keyword>
<keyword id="KW-0808">Transferase</keyword>
<dbReference type="EC" id="2.4.2.9" evidence="2"/>
<dbReference type="EMBL" id="BA000033">
    <property type="protein sequence ID" value="BAB94946.1"/>
    <property type="molecule type" value="Genomic_DNA"/>
</dbReference>
<dbReference type="RefSeq" id="WP_000003870.1">
    <property type="nucleotide sequence ID" value="NC_003923.1"/>
</dbReference>
<dbReference type="SMR" id="P65945"/>
<dbReference type="KEGG" id="sam:MW1081"/>
<dbReference type="HOGENOM" id="CLU_094234_2_1_9"/>
<dbReference type="GO" id="GO:0003723">
    <property type="term" value="F:RNA binding"/>
    <property type="evidence" value="ECO:0007669"/>
    <property type="project" value="UniProtKB-UniRule"/>
</dbReference>
<dbReference type="GO" id="GO:0004845">
    <property type="term" value="F:uracil phosphoribosyltransferase activity"/>
    <property type="evidence" value="ECO:0007669"/>
    <property type="project" value="UniProtKB-UniRule"/>
</dbReference>
<dbReference type="GO" id="GO:0006353">
    <property type="term" value="P:DNA-templated transcription termination"/>
    <property type="evidence" value="ECO:0007669"/>
    <property type="project" value="UniProtKB-UniRule"/>
</dbReference>
<dbReference type="CDD" id="cd06223">
    <property type="entry name" value="PRTases_typeI"/>
    <property type="match status" value="1"/>
</dbReference>
<dbReference type="FunFam" id="3.40.50.2020:FF:000020">
    <property type="entry name" value="Bifunctional protein PyrR"/>
    <property type="match status" value="1"/>
</dbReference>
<dbReference type="Gene3D" id="3.40.50.2020">
    <property type="match status" value="1"/>
</dbReference>
<dbReference type="HAMAP" id="MF_01219">
    <property type="entry name" value="PyrR"/>
    <property type="match status" value="1"/>
</dbReference>
<dbReference type="InterPro" id="IPR000836">
    <property type="entry name" value="PRibTrfase_dom"/>
</dbReference>
<dbReference type="InterPro" id="IPR029057">
    <property type="entry name" value="PRTase-like"/>
</dbReference>
<dbReference type="InterPro" id="IPR023050">
    <property type="entry name" value="PyrR"/>
</dbReference>
<dbReference type="InterPro" id="IPR050137">
    <property type="entry name" value="PyrR_bifunctional"/>
</dbReference>
<dbReference type="NCBIfam" id="NF003546">
    <property type="entry name" value="PRK05205.1-2"/>
    <property type="match status" value="1"/>
</dbReference>
<dbReference type="NCBIfam" id="NF003548">
    <property type="entry name" value="PRK05205.1-4"/>
    <property type="match status" value="1"/>
</dbReference>
<dbReference type="NCBIfam" id="NF003549">
    <property type="entry name" value="PRK05205.1-5"/>
    <property type="match status" value="1"/>
</dbReference>
<dbReference type="PANTHER" id="PTHR11608">
    <property type="entry name" value="BIFUNCTIONAL PROTEIN PYRR"/>
    <property type="match status" value="1"/>
</dbReference>
<dbReference type="PANTHER" id="PTHR11608:SF0">
    <property type="entry name" value="BIFUNCTIONAL PROTEIN PYRR"/>
    <property type="match status" value="1"/>
</dbReference>
<dbReference type="Pfam" id="PF00156">
    <property type="entry name" value="Pribosyltran"/>
    <property type="match status" value="1"/>
</dbReference>
<dbReference type="SUPFAM" id="SSF53271">
    <property type="entry name" value="PRTase-like"/>
    <property type="match status" value="1"/>
</dbReference>